<feature type="chain" id="PRO_0000354928" description="Catalase-peroxidase">
    <location>
        <begin position="1"/>
        <end position="726"/>
    </location>
</feature>
<feature type="region of interest" description="Disordered" evidence="2">
    <location>
        <begin position="1"/>
        <end position="33"/>
    </location>
</feature>
<feature type="active site" description="Proton acceptor" evidence="1">
    <location>
        <position position="106"/>
    </location>
</feature>
<feature type="binding site" description="axial binding residue" evidence="1">
    <location>
        <position position="267"/>
    </location>
    <ligand>
        <name>heme b</name>
        <dbReference type="ChEBI" id="CHEBI:60344"/>
    </ligand>
    <ligandPart>
        <name>Fe</name>
        <dbReference type="ChEBI" id="CHEBI:18248"/>
    </ligandPart>
</feature>
<feature type="site" description="Transition state stabilizer" evidence="1">
    <location>
        <position position="102"/>
    </location>
</feature>
<feature type="cross-link" description="Tryptophyl-tyrosyl-methioninium (Trp-Tyr) (with M-252)" evidence="1">
    <location>
        <begin position="105"/>
        <end position="226"/>
    </location>
</feature>
<feature type="cross-link" description="Tryptophyl-tyrosyl-methioninium (Tyr-Met) (with W-105)" evidence="1">
    <location>
        <begin position="226"/>
        <end position="252"/>
    </location>
</feature>
<accession>B2TWE0</accession>
<gene>
    <name evidence="1" type="primary">katG</name>
    <name type="ordered locus">SbBS512_E4429</name>
</gene>
<organism>
    <name type="scientific">Shigella boydii serotype 18 (strain CDC 3083-94 / BS512)</name>
    <dbReference type="NCBI Taxonomy" id="344609"/>
    <lineage>
        <taxon>Bacteria</taxon>
        <taxon>Pseudomonadati</taxon>
        <taxon>Pseudomonadota</taxon>
        <taxon>Gammaproteobacteria</taxon>
        <taxon>Enterobacterales</taxon>
        <taxon>Enterobacteriaceae</taxon>
        <taxon>Shigella</taxon>
    </lineage>
</organism>
<protein>
    <recommendedName>
        <fullName evidence="1">Catalase-peroxidase</fullName>
        <shortName evidence="1">CP</shortName>
        <ecNumber evidence="1">1.11.1.21</ecNumber>
    </recommendedName>
    <alternativeName>
        <fullName evidence="1">Peroxidase/catalase</fullName>
    </alternativeName>
</protein>
<reference key="1">
    <citation type="submission" date="2008-05" db="EMBL/GenBank/DDBJ databases">
        <title>Complete sequence of Shigella boydii serotype 18 strain BS512.</title>
        <authorList>
            <person name="Rasko D.A."/>
            <person name="Rosovitz M."/>
            <person name="Maurelli A.T."/>
            <person name="Myers G."/>
            <person name="Seshadri R."/>
            <person name="Cer R."/>
            <person name="Jiang L."/>
            <person name="Ravel J."/>
            <person name="Sebastian Y."/>
        </authorList>
    </citation>
    <scope>NUCLEOTIDE SEQUENCE [LARGE SCALE GENOMIC DNA]</scope>
    <source>
        <strain>CDC 3083-94 / BS512</strain>
    </source>
</reference>
<comment type="function">
    <text evidence="1">Bifunctional enzyme with both catalase and broad-spectrum peroxidase activity.</text>
</comment>
<comment type="catalytic activity">
    <reaction evidence="1">
        <text>H2O2 + AH2 = A + 2 H2O</text>
        <dbReference type="Rhea" id="RHEA:30275"/>
        <dbReference type="ChEBI" id="CHEBI:13193"/>
        <dbReference type="ChEBI" id="CHEBI:15377"/>
        <dbReference type="ChEBI" id="CHEBI:16240"/>
        <dbReference type="ChEBI" id="CHEBI:17499"/>
        <dbReference type="EC" id="1.11.1.21"/>
    </reaction>
</comment>
<comment type="catalytic activity">
    <reaction evidence="1">
        <text>2 H2O2 = O2 + 2 H2O</text>
        <dbReference type="Rhea" id="RHEA:20309"/>
        <dbReference type="ChEBI" id="CHEBI:15377"/>
        <dbReference type="ChEBI" id="CHEBI:15379"/>
        <dbReference type="ChEBI" id="CHEBI:16240"/>
        <dbReference type="EC" id="1.11.1.21"/>
    </reaction>
</comment>
<comment type="cofactor">
    <cofactor evidence="1">
        <name>heme b</name>
        <dbReference type="ChEBI" id="CHEBI:60344"/>
    </cofactor>
    <text evidence="1">Binds 1 heme b (iron(II)-protoporphyrin IX) group per dimer.</text>
</comment>
<comment type="subunit">
    <text evidence="1">Homodimer or homotetramer.</text>
</comment>
<comment type="PTM">
    <text evidence="1">Formation of the three residue Trp-Tyr-Met cross-link is important for the catalase, but not the peroxidase activity of the enzyme.</text>
</comment>
<comment type="similarity">
    <text evidence="1">Belongs to the peroxidase family. Peroxidase/catalase subfamily.</text>
</comment>
<keyword id="KW-0349">Heme</keyword>
<keyword id="KW-0376">Hydrogen peroxide</keyword>
<keyword id="KW-0408">Iron</keyword>
<keyword id="KW-0479">Metal-binding</keyword>
<keyword id="KW-0560">Oxidoreductase</keyword>
<keyword id="KW-0575">Peroxidase</keyword>
<keyword id="KW-1185">Reference proteome</keyword>
<proteinExistence type="inferred from homology"/>
<sequence length="726" mass="80056">MSTSDDIHNTTATGKCPFHQGGHDQSAGAGTTTRDWWPNQLRVDLLNQHSNRSNPLGEDFDYRKEFSKLDYYGLKKDLKALLTESQPWWPADWGSYAGLFIRMAWHGAGTYRSIDGRGGAGRGQQRFAPLNSWPDNVSLDKARRLLWPIKQKYGQKISWADLFILAGNVALENSGFRTFGFGAGREDVWEPDLDVNWGDEKAWLTHRHPEALAKAPLGATEMGLIYVNPEGPDHSGEPLSAAAAIRATFGNMGMNDEETVALIAGGHTLGKTHGAGPTSNVGPDPEAAPIEEQGLGWASTYGSGVGADAITSGLEVVWTQTPTQWSNYFFENLFKYEWVQTRSPAGAIQFDAVDAPEIIPDPFDPSKKRKPTMLVTDLTLRFDPEFEKISRRFLNDPQAFNEAFARAWFKLTHRDMGPKSRYIGPEVPKEDLIWQDPLPQPIYNPTEQDIIDLKFAIADSGLSVSELVSVAWASASTFRGGDKRGGANGARLALMPQRDWDVNAAAVRALPVLEKIQKESGKASLADIIVLAGVVGVEKAASAAGLSIHVPFAPGRVDARQDQTDIEMFELLEPIADGFRNYRARLDVSTTESLLIDKAQQLTLTAPEMTALVGGMRVLGANFDSSKNGVFTDRVGVLSNDFFVNLLDMRYEWKATDESKELFEGRDRETGEVKYTASRADLVFGSNSVLRAVAEVYASSDAHEKFVKDFVAAWVKVMNLDRFDLL</sequence>
<evidence type="ECO:0000255" key="1">
    <source>
        <dbReference type="HAMAP-Rule" id="MF_01961"/>
    </source>
</evidence>
<evidence type="ECO:0000256" key="2">
    <source>
        <dbReference type="SAM" id="MobiDB-lite"/>
    </source>
</evidence>
<name>KATG_SHIB3</name>
<dbReference type="EC" id="1.11.1.21" evidence="1"/>
<dbReference type="EMBL" id="CP001063">
    <property type="protein sequence ID" value="ACD06564.1"/>
    <property type="molecule type" value="Genomic_DNA"/>
</dbReference>
<dbReference type="RefSeq" id="WP_012421241.1">
    <property type="nucleotide sequence ID" value="NC_010658.1"/>
</dbReference>
<dbReference type="SMR" id="B2TWE0"/>
<dbReference type="STRING" id="344609.SbBS512_E4429"/>
<dbReference type="KEGG" id="sbc:SbBS512_E4429"/>
<dbReference type="HOGENOM" id="CLU_025424_2_0_6"/>
<dbReference type="Proteomes" id="UP000001030">
    <property type="component" value="Chromosome"/>
</dbReference>
<dbReference type="GO" id="GO:0005829">
    <property type="term" value="C:cytosol"/>
    <property type="evidence" value="ECO:0007669"/>
    <property type="project" value="TreeGrafter"/>
</dbReference>
<dbReference type="GO" id="GO:0004096">
    <property type="term" value="F:catalase activity"/>
    <property type="evidence" value="ECO:0007669"/>
    <property type="project" value="UniProtKB-UniRule"/>
</dbReference>
<dbReference type="GO" id="GO:0020037">
    <property type="term" value="F:heme binding"/>
    <property type="evidence" value="ECO:0007669"/>
    <property type="project" value="InterPro"/>
</dbReference>
<dbReference type="GO" id="GO:0046872">
    <property type="term" value="F:metal ion binding"/>
    <property type="evidence" value="ECO:0007669"/>
    <property type="project" value="UniProtKB-KW"/>
</dbReference>
<dbReference type="GO" id="GO:0070301">
    <property type="term" value="P:cellular response to hydrogen peroxide"/>
    <property type="evidence" value="ECO:0007669"/>
    <property type="project" value="TreeGrafter"/>
</dbReference>
<dbReference type="GO" id="GO:0042744">
    <property type="term" value="P:hydrogen peroxide catabolic process"/>
    <property type="evidence" value="ECO:0007669"/>
    <property type="project" value="UniProtKB-KW"/>
</dbReference>
<dbReference type="CDD" id="cd08200">
    <property type="entry name" value="catalase_peroxidase_2"/>
    <property type="match status" value="1"/>
</dbReference>
<dbReference type="FunFam" id="1.10.420.10:FF:000002">
    <property type="entry name" value="Catalase-peroxidase"/>
    <property type="match status" value="1"/>
</dbReference>
<dbReference type="FunFam" id="1.10.420.10:FF:000004">
    <property type="entry name" value="Catalase-peroxidase"/>
    <property type="match status" value="1"/>
</dbReference>
<dbReference type="FunFam" id="1.10.520.10:FF:000002">
    <property type="entry name" value="Catalase-peroxidase"/>
    <property type="match status" value="1"/>
</dbReference>
<dbReference type="Gene3D" id="1.10.520.10">
    <property type="match status" value="2"/>
</dbReference>
<dbReference type="Gene3D" id="1.10.420.10">
    <property type="entry name" value="Peroxidase, domain 2"/>
    <property type="match status" value="2"/>
</dbReference>
<dbReference type="HAMAP" id="MF_01961">
    <property type="entry name" value="Catal_peroxid"/>
    <property type="match status" value="1"/>
</dbReference>
<dbReference type="InterPro" id="IPR000763">
    <property type="entry name" value="Catalase_peroxidase"/>
</dbReference>
<dbReference type="InterPro" id="IPR002016">
    <property type="entry name" value="Haem_peroxidase"/>
</dbReference>
<dbReference type="InterPro" id="IPR010255">
    <property type="entry name" value="Haem_peroxidase_sf"/>
</dbReference>
<dbReference type="InterPro" id="IPR019794">
    <property type="entry name" value="Peroxidases_AS"/>
</dbReference>
<dbReference type="InterPro" id="IPR019793">
    <property type="entry name" value="Peroxidases_heam-ligand_BS"/>
</dbReference>
<dbReference type="NCBIfam" id="TIGR00198">
    <property type="entry name" value="cat_per_HPI"/>
    <property type="match status" value="1"/>
</dbReference>
<dbReference type="NCBIfam" id="NF011635">
    <property type="entry name" value="PRK15061.1"/>
    <property type="match status" value="1"/>
</dbReference>
<dbReference type="PANTHER" id="PTHR30555:SF0">
    <property type="entry name" value="CATALASE-PEROXIDASE"/>
    <property type="match status" value="1"/>
</dbReference>
<dbReference type="PANTHER" id="PTHR30555">
    <property type="entry name" value="HYDROPEROXIDASE I, BIFUNCTIONAL CATALASE-PEROXIDASE"/>
    <property type="match status" value="1"/>
</dbReference>
<dbReference type="Pfam" id="PF00141">
    <property type="entry name" value="peroxidase"/>
    <property type="match status" value="2"/>
</dbReference>
<dbReference type="PRINTS" id="PR00460">
    <property type="entry name" value="BPEROXIDASE"/>
</dbReference>
<dbReference type="PRINTS" id="PR00458">
    <property type="entry name" value="PEROXIDASE"/>
</dbReference>
<dbReference type="SUPFAM" id="SSF48113">
    <property type="entry name" value="Heme-dependent peroxidases"/>
    <property type="match status" value="2"/>
</dbReference>
<dbReference type="PROSITE" id="PS00435">
    <property type="entry name" value="PEROXIDASE_1"/>
    <property type="match status" value="1"/>
</dbReference>
<dbReference type="PROSITE" id="PS00436">
    <property type="entry name" value="PEROXIDASE_2"/>
    <property type="match status" value="1"/>
</dbReference>
<dbReference type="PROSITE" id="PS50873">
    <property type="entry name" value="PEROXIDASE_4"/>
    <property type="match status" value="1"/>
</dbReference>